<organism>
    <name type="scientific">Polaromonas sp. (strain JS666 / ATCC BAA-500)</name>
    <dbReference type="NCBI Taxonomy" id="296591"/>
    <lineage>
        <taxon>Bacteria</taxon>
        <taxon>Pseudomonadati</taxon>
        <taxon>Pseudomonadota</taxon>
        <taxon>Betaproteobacteria</taxon>
        <taxon>Burkholderiales</taxon>
        <taxon>Comamonadaceae</taxon>
        <taxon>Polaromonas</taxon>
    </lineage>
</organism>
<comment type="function">
    <text evidence="1">Thiolesterase that catalyzes the hydrolysis of S-D-lactoyl-glutathione to form glutathione and D-lactic acid.</text>
</comment>
<comment type="catalytic activity">
    <reaction evidence="1">
        <text>an S-(2-hydroxyacyl)glutathione + H2O = a 2-hydroxy carboxylate + glutathione + H(+)</text>
        <dbReference type="Rhea" id="RHEA:21864"/>
        <dbReference type="ChEBI" id="CHEBI:15377"/>
        <dbReference type="ChEBI" id="CHEBI:15378"/>
        <dbReference type="ChEBI" id="CHEBI:57925"/>
        <dbReference type="ChEBI" id="CHEBI:58896"/>
        <dbReference type="ChEBI" id="CHEBI:71261"/>
        <dbReference type="EC" id="3.1.2.6"/>
    </reaction>
</comment>
<comment type="cofactor">
    <cofactor evidence="1">
        <name>Zn(2+)</name>
        <dbReference type="ChEBI" id="CHEBI:29105"/>
    </cofactor>
    <text evidence="1">Binds 2 Zn(2+) ions per subunit.</text>
</comment>
<comment type="pathway">
    <text evidence="1">Secondary metabolite metabolism; methylglyoxal degradation; (R)-lactate from methylglyoxal: step 2/2.</text>
</comment>
<comment type="subunit">
    <text evidence="1">Monomer.</text>
</comment>
<comment type="similarity">
    <text evidence="1">Belongs to the metallo-beta-lactamase superfamily. Glyoxalase II family.</text>
</comment>
<accession>Q12BV7</accession>
<proteinExistence type="inferred from homology"/>
<reference key="1">
    <citation type="journal article" date="2008" name="Appl. Environ. Microbiol.">
        <title>The genome of Polaromonas sp. strain JS666: insights into the evolution of a hydrocarbon- and xenobiotic-degrading bacterium, and features of relevance to biotechnology.</title>
        <authorList>
            <person name="Mattes T.E."/>
            <person name="Alexander A.K."/>
            <person name="Richardson P.M."/>
            <person name="Munk A.C."/>
            <person name="Han C.S."/>
            <person name="Stothard P."/>
            <person name="Coleman N.V."/>
        </authorList>
    </citation>
    <scope>NUCLEOTIDE SEQUENCE [LARGE SCALE GENOMIC DNA]</scope>
    <source>
        <strain>JS666 / ATCC BAA-500</strain>
    </source>
</reference>
<gene>
    <name evidence="1" type="primary">gloB</name>
    <name type="ordered locus">Bpro_2055</name>
</gene>
<keyword id="KW-0378">Hydrolase</keyword>
<keyword id="KW-0479">Metal-binding</keyword>
<keyword id="KW-1185">Reference proteome</keyword>
<keyword id="KW-0862">Zinc</keyword>
<protein>
    <recommendedName>
        <fullName evidence="1">Hydroxyacylglutathione hydrolase</fullName>
        <ecNumber evidence="1">3.1.2.6</ecNumber>
    </recommendedName>
    <alternativeName>
        <fullName evidence="1">Glyoxalase II</fullName>
        <shortName evidence="1">Glx II</shortName>
    </alternativeName>
</protein>
<evidence type="ECO:0000255" key="1">
    <source>
        <dbReference type="HAMAP-Rule" id="MF_01374"/>
    </source>
</evidence>
<dbReference type="EC" id="3.1.2.6" evidence="1"/>
<dbReference type="EMBL" id="CP000316">
    <property type="protein sequence ID" value="ABE43985.1"/>
    <property type="molecule type" value="Genomic_DNA"/>
</dbReference>
<dbReference type="RefSeq" id="WP_011482984.1">
    <property type="nucleotide sequence ID" value="NC_007948.1"/>
</dbReference>
<dbReference type="SMR" id="Q12BV7"/>
<dbReference type="STRING" id="296591.Bpro_2055"/>
<dbReference type="KEGG" id="pol:Bpro_2055"/>
<dbReference type="eggNOG" id="COG0491">
    <property type="taxonomic scope" value="Bacteria"/>
</dbReference>
<dbReference type="HOGENOM" id="CLU_030571_4_1_4"/>
<dbReference type="OrthoDB" id="9802248at2"/>
<dbReference type="UniPathway" id="UPA00619">
    <property type="reaction ID" value="UER00676"/>
</dbReference>
<dbReference type="Proteomes" id="UP000001983">
    <property type="component" value="Chromosome"/>
</dbReference>
<dbReference type="GO" id="GO:0004416">
    <property type="term" value="F:hydroxyacylglutathione hydrolase activity"/>
    <property type="evidence" value="ECO:0007669"/>
    <property type="project" value="UniProtKB-UniRule"/>
</dbReference>
<dbReference type="GO" id="GO:0046872">
    <property type="term" value="F:metal ion binding"/>
    <property type="evidence" value="ECO:0007669"/>
    <property type="project" value="UniProtKB-KW"/>
</dbReference>
<dbReference type="GO" id="GO:0019243">
    <property type="term" value="P:methylglyoxal catabolic process to D-lactate via S-lactoyl-glutathione"/>
    <property type="evidence" value="ECO:0007669"/>
    <property type="project" value="InterPro"/>
</dbReference>
<dbReference type="CDD" id="cd07723">
    <property type="entry name" value="hydroxyacylglutathione_hydrolase_MBL-fold"/>
    <property type="match status" value="1"/>
</dbReference>
<dbReference type="Gene3D" id="3.60.15.10">
    <property type="entry name" value="Ribonuclease Z/Hydroxyacylglutathione hydrolase-like"/>
    <property type="match status" value="1"/>
</dbReference>
<dbReference type="HAMAP" id="MF_01374">
    <property type="entry name" value="Glyoxalase_2"/>
    <property type="match status" value="1"/>
</dbReference>
<dbReference type="InterPro" id="IPR035680">
    <property type="entry name" value="Clx_II_MBL"/>
</dbReference>
<dbReference type="InterPro" id="IPR032282">
    <property type="entry name" value="HAGH_C"/>
</dbReference>
<dbReference type="InterPro" id="IPR017782">
    <property type="entry name" value="Hydroxyacylglutathione_Hdrlase"/>
</dbReference>
<dbReference type="InterPro" id="IPR001279">
    <property type="entry name" value="Metallo-B-lactamas"/>
</dbReference>
<dbReference type="InterPro" id="IPR036866">
    <property type="entry name" value="RibonucZ/Hydroxyglut_hydro"/>
</dbReference>
<dbReference type="PANTHER" id="PTHR11935">
    <property type="entry name" value="BETA LACTAMASE DOMAIN"/>
    <property type="match status" value="1"/>
</dbReference>
<dbReference type="PANTHER" id="PTHR11935:SF94">
    <property type="entry name" value="TENZING NORGAY, ISOFORM C"/>
    <property type="match status" value="1"/>
</dbReference>
<dbReference type="Pfam" id="PF16123">
    <property type="entry name" value="HAGH_C"/>
    <property type="match status" value="1"/>
</dbReference>
<dbReference type="Pfam" id="PF00753">
    <property type="entry name" value="Lactamase_B"/>
    <property type="match status" value="1"/>
</dbReference>
<dbReference type="SMART" id="SM00849">
    <property type="entry name" value="Lactamase_B"/>
    <property type="match status" value="1"/>
</dbReference>
<dbReference type="SUPFAM" id="SSF56281">
    <property type="entry name" value="Metallo-hydrolase/oxidoreductase"/>
    <property type="match status" value="1"/>
</dbReference>
<feature type="chain" id="PRO_0000309674" description="Hydroxyacylglutathione hydrolase">
    <location>
        <begin position="1"/>
        <end position="263"/>
    </location>
</feature>
<feature type="binding site" evidence="1">
    <location>
        <position position="56"/>
    </location>
    <ligand>
        <name>Zn(2+)</name>
        <dbReference type="ChEBI" id="CHEBI:29105"/>
        <label>1</label>
    </ligand>
</feature>
<feature type="binding site" evidence="1">
    <location>
        <position position="58"/>
    </location>
    <ligand>
        <name>Zn(2+)</name>
        <dbReference type="ChEBI" id="CHEBI:29105"/>
        <label>1</label>
    </ligand>
</feature>
<feature type="binding site" evidence="1">
    <location>
        <position position="60"/>
    </location>
    <ligand>
        <name>Zn(2+)</name>
        <dbReference type="ChEBI" id="CHEBI:29105"/>
        <label>2</label>
    </ligand>
</feature>
<feature type="binding site" evidence="1">
    <location>
        <position position="61"/>
    </location>
    <ligand>
        <name>Zn(2+)</name>
        <dbReference type="ChEBI" id="CHEBI:29105"/>
        <label>2</label>
    </ligand>
</feature>
<feature type="binding site" evidence="1">
    <location>
        <position position="115"/>
    </location>
    <ligand>
        <name>Zn(2+)</name>
        <dbReference type="ChEBI" id="CHEBI:29105"/>
        <label>1</label>
    </ligand>
</feature>
<feature type="binding site" evidence="1">
    <location>
        <position position="135"/>
    </location>
    <ligand>
        <name>Zn(2+)</name>
        <dbReference type="ChEBI" id="CHEBI:29105"/>
        <label>1</label>
    </ligand>
</feature>
<feature type="binding site" evidence="1">
    <location>
        <position position="135"/>
    </location>
    <ligand>
        <name>Zn(2+)</name>
        <dbReference type="ChEBI" id="CHEBI:29105"/>
        <label>2</label>
    </ligand>
</feature>
<feature type="binding site" evidence="1">
    <location>
        <position position="175"/>
    </location>
    <ligand>
        <name>Zn(2+)</name>
        <dbReference type="ChEBI" id="CHEBI:29105"/>
        <label>2</label>
    </ligand>
</feature>
<name>GLO2_POLSJ</name>
<sequence length="263" mass="28758">MIVERIWTGNAYRNFNYLIACPETGEALAIDPLDHEKTLATARVKGWQITQVLNTHEHHDHTGGNAAVIAATGAKLIAHHKAGGRIAGVDRGVKAGDVIKVGKTVELECLDTPGHTMCHICLRSHTEQPALFSGDTLFNAGAGNVHNGGDVNALYATFAEQLARLPDDTLVYPGHDYIENNLRFTLAREPDNAAAKALLPSVTDHDPAKSAVTTLKDEKEFNTFLRLSSPSVIARLRESFPDLPDEPDARTVFAKLRELRNQW</sequence>